<gene>
    <name evidence="6" type="primary">cnp-4</name>
</gene>
<accession>Q805D3</accession>
<name>ANFC4_TAKRU</name>
<evidence type="ECO:0000250" key="1"/>
<evidence type="ECO:0000250" key="2">
    <source>
        <dbReference type="UniProtKB" id="P18145"/>
    </source>
</evidence>
<evidence type="ECO:0000255" key="3"/>
<evidence type="ECO:0000255" key="4">
    <source>
        <dbReference type="RuleBase" id="RU003686"/>
    </source>
</evidence>
<evidence type="ECO:0000303" key="5">
    <source>
    </source>
</evidence>
<evidence type="ECO:0000312" key="6">
    <source>
        <dbReference type="EMBL" id="BAC57074.1"/>
    </source>
</evidence>
<organism>
    <name type="scientific">Takifugu rubripes</name>
    <name type="common">Japanese pufferfish</name>
    <name type="synonym">Fugu rubripes</name>
    <dbReference type="NCBI Taxonomy" id="31033"/>
    <lineage>
        <taxon>Eukaryota</taxon>
        <taxon>Metazoa</taxon>
        <taxon>Chordata</taxon>
        <taxon>Craniata</taxon>
        <taxon>Vertebrata</taxon>
        <taxon>Euteleostomi</taxon>
        <taxon>Actinopterygii</taxon>
        <taxon>Neopterygii</taxon>
        <taxon>Teleostei</taxon>
        <taxon>Neoteleostei</taxon>
        <taxon>Acanthomorphata</taxon>
        <taxon>Eupercaria</taxon>
        <taxon>Tetraodontiformes</taxon>
        <taxon>Tetradontoidea</taxon>
        <taxon>Tetraodontidae</taxon>
        <taxon>Takifugu</taxon>
    </lineage>
</organism>
<protein>
    <recommendedName>
        <fullName>C-type natriuretic peptide 4</fullName>
    </recommendedName>
</protein>
<keyword id="KW-0165">Cleavage on pair of basic residues</keyword>
<keyword id="KW-1015">Disulfide bond</keyword>
<keyword id="KW-0372">Hormone</keyword>
<keyword id="KW-1185">Reference proteome</keyword>
<keyword id="KW-0964">Secreted</keyword>
<keyword id="KW-0732">Signal</keyword>
<keyword id="KW-0838">Vasoactive</keyword>
<proteinExistence type="evidence at transcript level"/>
<feature type="signal peptide" evidence="3">
    <location>
        <begin position="1"/>
        <end position="22"/>
    </location>
</feature>
<feature type="propeptide" id="PRO_0000001587" evidence="1">
    <location>
        <begin position="23"/>
        <end position="96"/>
    </location>
</feature>
<feature type="peptide" id="PRO_0000001588" description="C-type natriuretic peptide 4">
    <location>
        <begin position="97"/>
        <end position="120"/>
    </location>
</feature>
<feature type="disulfide bond" evidence="2">
    <location>
        <begin position="104"/>
        <end position="120"/>
    </location>
</feature>
<reference evidence="6" key="1">
    <citation type="journal article" date="2003" name="Proc. Natl. Acad. Sci. U.S.A.">
        <title>Four functionally distinct C-type natriuretic peptides found in fish reveal evolutionary history of the natriuretic peptide system.</title>
        <authorList>
            <person name="Inoue K."/>
            <person name="Naruse K."/>
            <person name="Yamagami S."/>
            <person name="Mitani H."/>
            <person name="Suzuki N."/>
            <person name="Takei Y."/>
        </authorList>
    </citation>
    <scope>NUCLEOTIDE SEQUENCE [MRNA]</scope>
    <source>
        <tissue evidence="6">Brain</tissue>
    </source>
</reference>
<comment type="function">
    <text evidence="2 5">Exhibits natriuretic and vasodepressant activity. Has cGMP-stimulating activity. May help to regulate body fluid homeostasis in a variety of aquatic environments.</text>
</comment>
<comment type="subcellular location">
    <subcellularLocation>
        <location>Secreted</location>
    </subcellularLocation>
</comment>
<comment type="similarity">
    <text evidence="4">Belongs to the natriuretic peptide family.</text>
</comment>
<sequence length="120" mass="13504">MNLSYLVACGLMITLLSVRMGAKPLSQAQQKSFRSLLGEELAEFLESEEKERRLDAVRSRLRLLRDLRMDTRARGVWARLLNDQPVPRRHKTGIKKGGSSRSGCFGHKMDRIGTISGMGC</sequence>
<dbReference type="EMBL" id="AB089938">
    <property type="protein sequence ID" value="BAC57074.1"/>
    <property type="molecule type" value="mRNA"/>
</dbReference>
<dbReference type="FunCoup" id="Q805D3">
    <property type="interactions" value="369"/>
</dbReference>
<dbReference type="STRING" id="31033.ENSTRUP00000022021"/>
<dbReference type="Ensembl" id="ENSTRUT00000022111.3">
    <property type="protein sequence ID" value="ENSTRUP00000022021.1"/>
    <property type="gene ID" value="ENSTRUG00000008768.3"/>
</dbReference>
<dbReference type="KEGG" id="tru:445907"/>
<dbReference type="CTD" id="4880"/>
<dbReference type="eggNOG" id="ENOG502S2QY">
    <property type="taxonomic scope" value="Eukaryota"/>
</dbReference>
<dbReference type="GeneTree" id="ENSGT00390000015492"/>
<dbReference type="HOGENOM" id="CLU_160791_0_0_1"/>
<dbReference type="InParanoid" id="Q805D3"/>
<dbReference type="OMA" id="HDYPNAR"/>
<dbReference type="OrthoDB" id="8911465at2759"/>
<dbReference type="TreeFam" id="TF106305"/>
<dbReference type="Proteomes" id="UP000005226">
    <property type="component" value="Chromosome 20"/>
</dbReference>
<dbReference type="GO" id="GO:0005576">
    <property type="term" value="C:extracellular region"/>
    <property type="evidence" value="ECO:0007669"/>
    <property type="project" value="UniProtKB-SubCell"/>
</dbReference>
<dbReference type="GO" id="GO:0005179">
    <property type="term" value="F:hormone activity"/>
    <property type="evidence" value="ECO:0007669"/>
    <property type="project" value="UniProtKB-KW"/>
</dbReference>
<dbReference type="GO" id="GO:0097746">
    <property type="term" value="P:blood vessel diameter maintenance"/>
    <property type="evidence" value="ECO:0007669"/>
    <property type="project" value="UniProtKB-KW"/>
</dbReference>
<dbReference type="GO" id="GO:0006182">
    <property type="term" value="P:cGMP biosynthetic process"/>
    <property type="evidence" value="ECO:0007669"/>
    <property type="project" value="TreeGrafter"/>
</dbReference>
<dbReference type="GO" id="GO:0007168">
    <property type="term" value="P:receptor guanylyl cyclase signaling pathway"/>
    <property type="evidence" value="ECO:0007669"/>
    <property type="project" value="TreeGrafter"/>
</dbReference>
<dbReference type="InterPro" id="IPR002406">
    <property type="entry name" value="C_natriurtcpep"/>
</dbReference>
<dbReference type="InterPro" id="IPR000663">
    <property type="entry name" value="Natr_peptide"/>
</dbReference>
<dbReference type="InterPro" id="IPR030480">
    <property type="entry name" value="Natr_peptide_CS"/>
</dbReference>
<dbReference type="PANTHER" id="PTHR12167">
    <property type="entry name" value="C-TYPE NATRIURETIC PEPTIDE"/>
    <property type="match status" value="1"/>
</dbReference>
<dbReference type="PANTHER" id="PTHR12167:SF2">
    <property type="entry name" value="C-TYPE NATRIURETIC PEPTIDE"/>
    <property type="match status" value="1"/>
</dbReference>
<dbReference type="Pfam" id="PF00212">
    <property type="entry name" value="ANP"/>
    <property type="match status" value="1"/>
</dbReference>
<dbReference type="PRINTS" id="PR00713">
    <property type="entry name" value="CNATPEPTIDE"/>
</dbReference>
<dbReference type="PRINTS" id="PR00710">
    <property type="entry name" value="NATPEPTIDES"/>
</dbReference>
<dbReference type="SMART" id="SM00183">
    <property type="entry name" value="NAT_PEP"/>
    <property type="match status" value="1"/>
</dbReference>
<dbReference type="PROSITE" id="PS00263">
    <property type="entry name" value="NATRIURETIC_PEPTIDE"/>
    <property type="match status" value="1"/>
</dbReference>